<sequence>MSIIKEFKEFAVKGNVMDLAIGVIIGGAFSKIVDSVVKDLIMPVIGVLTGGLDFSNKFVLLGQIPASFKGNPESFKDLQAAGVATFGYGSFITVLINFIILAFIIFLMVKFINKLRKPEEAAPAATPEDVLLLREIRDSLKQR</sequence>
<evidence type="ECO:0000255" key="1">
    <source>
        <dbReference type="HAMAP-Rule" id="MF_00115"/>
    </source>
</evidence>
<name>MSCL_BURP6</name>
<protein>
    <recommendedName>
        <fullName evidence="1">Large-conductance mechanosensitive channel</fullName>
    </recommendedName>
</protein>
<reference key="1">
    <citation type="journal article" date="2010" name="Genome Biol. Evol.">
        <title>Continuing evolution of Burkholderia mallei through genome reduction and large-scale rearrangements.</title>
        <authorList>
            <person name="Losada L."/>
            <person name="Ronning C.M."/>
            <person name="DeShazer D."/>
            <person name="Woods D."/>
            <person name="Fedorova N."/>
            <person name="Kim H.S."/>
            <person name="Shabalina S.A."/>
            <person name="Pearson T.R."/>
            <person name="Brinkac L."/>
            <person name="Tan P."/>
            <person name="Nandi T."/>
            <person name="Crabtree J."/>
            <person name="Badger J."/>
            <person name="Beckstrom-Sternberg S."/>
            <person name="Saqib M."/>
            <person name="Schutzer S.E."/>
            <person name="Keim P."/>
            <person name="Nierman W.C."/>
        </authorList>
    </citation>
    <scope>NUCLEOTIDE SEQUENCE [LARGE SCALE GENOMIC DNA]</scope>
    <source>
        <strain>668</strain>
    </source>
</reference>
<feature type="chain" id="PRO_1000015364" description="Large-conductance mechanosensitive channel">
    <location>
        <begin position="1"/>
        <end position="143"/>
    </location>
</feature>
<feature type="transmembrane region" description="Helical" evidence="1">
    <location>
        <begin position="10"/>
        <end position="30"/>
    </location>
</feature>
<feature type="transmembrane region" description="Helical" evidence="1">
    <location>
        <begin position="89"/>
        <end position="109"/>
    </location>
</feature>
<gene>
    <name evidence="1" type="primary">mscL</name>
    <name type="ordered locus">BURPS668_2373</name>
</gene>
<keyword id="KW-0997">Cell inner membrane</keyword>
<keyword id="KW-1003">Cell membrane</keyword>
<keyword id="KW-0407">Ion channel</keyword>
<keyword id="KW-0406">Ion transport</keyword>
<keyword id="KW-0472">Membrane</keyword>
<keyword id="KW-0812">Transmembrane</keyword>
<keyword id="KW-1133">Transmembrane helix</keyword>
<keyword id="KW-0813">Transport</keyword>
<accession>A3NAN4</accession>
<dbReference type="EMBL" id="CP000570">
    <property type="protein sequence ID" value="ABN82530.1"/>
    <property type="molecule type" value="Genomic_DNA"/>
</dbReference>
<dbReference type="RefSeq" id="WP_004192898.1">
    <property type="nucleotide sequence ID" value="NC_009074.1"/>
</dbReference>
<dbReference type="SMR" id="A3NAN4"/>
<dbReference type="GeneID" id="93060637"/>
<dbReference type="KEGG" id="bpd:BURPS668_2373"/>
<dbReference type="HOGENOM" id="CLU_095787_0_1_4"/>
<dbReference type="GO" id="GO:0005886">
    <property type="term" value="C:plasma membrane"/>
    <property type="evidence" value="ECO:0007669"/>
    <property type="project" value="UniProtKB-SubCell"/>
</dbReference>
<dbReference type="GO" id="GO:0008381">
    <property type="term" value="F:mechanosensitive monoatomic ion channel activity"/>
    <property type="evidence" value="ECO:0007669"/>
    <property type="project" value="UniProtKB-UniRule"/>
</dbReference>
<dbReference type="Gene3D" id="1.10.1200.120">
    <property type="entry name" value="Large-conductance mechanosensitive channel, MscL, domain 1"/>
    <property type="match status" value="1"/>
</dbReference>
<dbReference type="HAMAP" id="MF_00115">
    <property type="entry name" value="MscL"/>
    <property type="match status" value="1"/>
</dbReference>
<dbReference type="InterPro" id="IPR019823">
    <property type="entry name" value="Mechanosensitive_channel_CS"/>
</dbReference>
<dbReference type="InterPro" id="IPR001185">
    <property type="entry name" value="MS_channel"/>
</dbReference>
<dbReference type="InterPro" id="IPR037673">
    <property type="entry name" value="MSC/AndL"/>
</dbReference>
<dbReference type="InterPro" id="IPR036019">
    <property type="entry name" value="MscL_channel"/>
</dbReference>
<dbReference type="NCBIfam" id="TIGR00220">
    <property type="entry name" value="mscL"/>
    <property type="match status" value="1"/>
</dbReference>
<dbReference type="NCBIfam" id="NF001843">
    <property type="entry name" value="PRK00567.1-4"/>
    <property type="match status" value="1"/>
</dbReference>
<dbReference type="NCBIfam" id="NF010557">
    <property type="entry name" value="PRK13952.1"/>
    <property type="match status" value="1"/>
</dbReference>
<dbReference type="PANTHER" id="PTHR30266:SF2">
    <property type="entry name" value="LARGE-CONDUCTANCE MECHANOSENSITIVE CHANNEL"/>
    <property type="match status" value="1"/>
</dbReference>
<dbReference type="PANTHER" id="PTHR30266">
    <property type="entry name" value="MECHANOSENSITIVE CHANNEL MSCL"/>
    <property type="match status" value="1"/>
</dbReference>
<dbReference type="Pfam" id="PF01741">
    <property type="entry name" value="MscL"/>
    <property type="match status" value="1"/>
</dbReference>
<dbReference type="PRINTS" id="PR01264">
    <property type="entry name" value="MECHCHANNEL"/>
</dbReference>
<dbReference type="SUPFAM" id="SSF81330">
    <property type="entry name" value="Gated mechanosensitive channel"/>
    <property type="match status" value="1"/>
</dbReference>
<dbReference type="PROSITE" id="PS01327">
    <property type="entry name" value="MSCL"/>
    <property type="match status" value="1"/>
</dbReference>
<organism>
    <name type="scientific">Burkholderia pseudomallei (strain 668)</name>
    <dbReference type="NCBI Taxonomy" id="320373"/>
    <lineage>
        <taxon>Bacteria</taxon>
        <taxon>Pseudomonadati</taxon>
        <taxon>Pseudomonadota</taxon>
        <taxon>Betaproteobacteria</taxon>
        <taxon>Burkholderiales</taxon>
        <taxon>Burkholderiaceae</taxon>
        <taxon>Burkholderia</taxon>
        <taxon>pseudomallei group</taxon>
    </lineage>
</organism>
<comment type="function">
    <text evidence="1">Channel that opens in response to stretch forces in the membrane lipid bilayer. May participate in the regulation of osmotic pressure changes within the cell.</text>
</comment>
<comment type="subunit">
    <text evidence="1">Homopentamer.</text>
</comment>
<comment type="subcellular location">
    <subcellularLocation>
        <location evidence="1">Cell inner membrane</location>
        <topology evidence="1">Multi-pass membrane protein</topology>
    </subcellularLocation>
</comment>
<comment type="similarity">
    <text evidence="1">Belongs to the MscL family.</text>
</comment>
<proteinExistence type="inferred from homology"/>